<organism>
    <name type="scientific">Haemophilus influenzae (strain ATCC 51907 / DSM 11121 / KW20 / Rd)</name>
    <dbReference type="NCBI Taxonomy" id="71421"/>
    <lineage>
        <taxon>Bacteria</taxon>
        <taxon>Pseudomonadati</taxon>
        <taxon>Pseudomonadota</taxon>
        <taxon>Gammaproteobacteria</taxon>
        <taxon>Pasteurellales</taxon>
        <taxon>Pasteurellaceae</taxon>
        <taxon>Haemophilus</taxon>
    </lineage>
</organism>
<keyword id="KW-1185">Reference proteome</keyword>
<dbReference type="EMBL" id="L42023">
    <property type="protein sequence ID" value="AAC22125.1"/>
    <property type="molecule type" value="Genomic_DNA"/>
</dbReference>
<dbReference type="PIR" id="I64007">
    <property type="entry name" value="I64007"/>
</dbReference>
<dbReference type="RefSeq" id="NP_438627.1">
    <property type="nucleotide sequence ID" value="NC_000907.1"/>
</dbReference>
<dbReference type="SMR" id="P44000"/>
<dbReference type="STRING" id="71421.HI_0466"/>
<dbReference type="EnsemblBacteria" id="AAC22125">
    <property type="protein sequence ID" value="AAC22125"/>
    <property type="gene ID" value="HI_0466"/>
</dbReference>
<dbReference type="KEGG" id="hin:HI_0466"/>
<dbReference type="PATRIC" id="fig|71421.8.peg.486"/>
<dbReference type="eggNOG" id="COG0354">
    <property type="taxonomic scope" value="Bacteria"/>
</dbReference>
<dbReference type="HOGENOM" id="CLU_007884_6_1_6"/>
<dbReference type="OrthoDB" id="9796287at2"/>
<dbReference type="PhylomeDB" id="P44000"/>
<dbReference type="BioCyc" id="HINF71421:G1GJ1-482-MONOMER"/>
<dbReference type="Proteomes" id="UP000000579">
    <property type="component" value="Chromosome"/>
</dbReference>
<dbReference type="GO" id="GO:0016226">
    <property type="term" value="P:iron-sulfur cluster assembly"/>
    <property type="evidence" value="ECO:0000318"/>
    <property type="project" value="GO_Central"/>
</dbReference>
<dbReference type="Gene3D" id="2.40.30.160">
    <property type="match status" value="1"/>
</dbReference>
<dbReference type="Gene3D" id="3.30.70.1400">
    <property type="entry name" value="Aminomethyltransferase beta-barrel domains"/>
    <property type="match status" value="1"/>
</dbReference>
<dbReference type="InterPro" id="IPR006222">
    <property type="entry name" value="GCV_T_N"/>
</dbReference>
<dbReference type="InterPro" id="IPR029043">
    <property type="entry name" value="GcvT/YgfZ_C"/>
</dbReference>
<dbReference type="InterPro" id="IPR045179">
    <property type="entry name" value="YgfZ/GcvT"/>
</dbReference>
<dbReference type="InterPro" id="IPR017703">
    <property type="entry name" value="YgfZ/GcvT_CS"/>
</dbReference>
<dbReference type="InterPro" id="IPR048451">
    <property type="entry name" value="YgfZ_barrel"/>
</dbReference>
<dbReference type="NCBIfam" id="TIGR03317">
    <property type="entry name" value="ygfZ_signature"/>
    <property type="match status" value="1"/>
</dbReference>
<dbReference type="PANTHER" id="PTHR22602">
    <property type="entry name" value="TRANSFERASE CAF17, MITOCHONDRIAL-RELATED"/>
    <property type="match status" value="1"/>
</dbReference>
<dbReference type="PANTHER" id="PTHR22602:SF0">
    <property type="entry name" value="TRANSFERASE CAF17, MITOCHONDRIAL-RELATED"/>
    <property type="match status" value="1"/>
</dbReference>
<dbReference type="Pfam" id="PF01571">
    <property type="entry name" value="GCV_T"/>
    <property type="match status" value="1"/>
</dbReference>
<dbReference type="Pfam" id="PF21130">
    <property type="entry name" value="YgfZ_barrel"/>
    <property type="match status" value="1"/>
</dbReference>
<dbReference type="PIRSF" id="PIRSF006487">
    <property type="entry name" value="GcvT"/>
    <property type="match status" value="1"/>
</dbReference>
<dbReference type="SUPFAM" id="SSF101790">
    <property type="entry name" value="Aminomethyltransferase beta-barrel domain"/>
    <property type="match status" value="1"/>
</dbReference>
<dbReference type="SUPFAM" id="SSF103025">
    <property type="entry name" value="Folate-binding domain"/>
    <property type="match status" value="1"/>
</dbReference>
<comment type="similarity">
    <text evidence="1">To E.coli YgfZ (UP14) and B.aphidicola (subsp. Acyrthosiphon pisum) BU435.</text>
</comment>
<protein>
    <recommendedName>
        <fullName>Uncharacterized protein HI_0466</fullName>
    </recommendedName>
</protein>
<sequence>MSQFISLTQYQLIEVQGADAEKYLQGQLTSDVVRLASGATTLTAHCDPKGKMNAIYRLFKVSSEQFFLLVKKDILPSGLDALKKYAVFSKVSFDLRDWQIIGVIGEKCGKITPNFSLEIDEKRSILLNETELPVNFNGDEKIWEVADIQAGLPNLSPQTQNEFIPQALNLQAIEQAISFTKGCYIGQETVARAKYRGANKRAMFIFKVQTQQEAEIGSEIEMQLEANWRKTGTITSAVNLDGVLWLQVVMNNDIDSEQQFRLLNSEILLERVQLPYSITE</sequence>
<name>Y466_HAEIN</name>
<evidence type="ECO:0000305" key="1"/>
<reference key="1">
    <citation type="journal article" date="1995" name="Science">
        <title>Whole-genome random sequencing and assembly of Haemophilus influenzae Rd.</title>
        <authorList>
            <person name="Fleischmann R.D."/>
            <person name="Adams M.D."/>
            <person name="White O."/>
            <person name="Clayton R.A."/>
            <person name="Kirkness E.F."/>
            <person name="Kerlavage A.R."/>
            <person name="Bult C.J."/>
            <person name="Tomb J.-F."/>
            <person name="Dougherty B.A."/>
            <person name="Merrick J.M."/>
            <person name="McKenney K."/>
            <person name="Sutton G.G."/>
            <person name="FitzHugh W."/>
            <person name="Fields C.A."/>
            <person name="Gocayne J.D."/>
            <person name="Scott J.D."/>
            <person name="Shirley R."/>
            <person name="Liu L.-I."/>
            <person name="Glodek A."/>
            <person name="Kelley J.M."/>
            <person name="Weidman J.F."/>
            <person name="Phillips C.A."/>
            <person name="Spriggs T."/>
            <person name="Hedblom E."/>
            <person name="Cotton M.D."/>
            <person name="Utterback T.R."/>
            <person name="Hanna M.C."/>
            <person name="Nguyen D.T."/>
            <person name="Saudek D.M."/>
            <person name="Brandon R.C."/>
            <person name="Fine L.D."/>
            <person name="Fritchman J.L."/>
            <person name="Fuhrmann J.L."/>
            <person name="Geoghagen N.S.M."/>
            <person name="Gnehm C.L."/>
            <person name="McDonald L.A."/>
            <person name="Small K.V."/>
            <person name="Fraser C.M."/>
            <person name="Smith H.O."/>
            <person name="Venter J.C."/>
        </authorList>
    </citation>
    <scope>NUCLEOTIDE SEQUENCE [LARGE SCALE GENOMIC DNA]</scope>
    <source>
        <strain>ATCC 51907 / DSM 11121 / KW20 / Rd</strain>
    </source>
</reference>
<feature type="chain" id="PRO_0000077926" description="Uncharacterized protein HI_0466">
    <location>
        <begin position="1"/>
        <end position="280"/>
    </location>
</feature>
<accession>P44000</accession>
<gene>
    <name type="ordered locus">HI_0466</name>
</gene>
<proteinExistence type="predicted"/>